<comment type="function">
    <text evidence="1">The central subunit of the protein translocation channel SecYEG. Consists of two halves formed by TMs 1-5 and 6-10. These two domains form a lateral gate at the front which open onto the bilayer between TMs 2 and 7, and are clamped together by SecE at the back. The channel is closed by both a pore ring composed of hydrophobic SecY resides and a short helix (helix 2A) on the extracellular side of the membrane which forms a plug. The plug probably moves laterally to allow the channel to open. The ring and the pore may move independently.</text>
</comment>
<comment type="subunit">
    <text evidence="1">Component of the Sec protein translocase complex. Heterotrimer consisting of SecY, SecE and SecG subunits. The heterotrimers can form oligomers, although 1 heterotrimer is thought to be able to translocate proteins. Interacts with the ribosome. Interacts with SecDF, and other proteins may be involved. Interacts with SecA.</text>
</comment>
<comment type="subcellular location">
    <subcellularLocation>
        <location evidence="1">Cell membrane</location>
        <topology evidence="1">Multi-pass membrane protein</topology>
    </subcellularLocation>
</comment>
<comment type="similarity">
    <text evidence="1">Belongs to the SecY/SEC61-alpha family.</text>
</comment>
<evidence type="ECO:0000255" key="1">
    <source>
        <dbReference type="HAMAP-Rule" id="MF_01465"/>
    </source>
</evidence>
<proteinExistence type="inferred from homology"/>
<feature type="chain" id="PRO_0000131749" description="Protein translocase subunit SecY">
    <location>
        <begin position="1"/>
        <end position="430"/>
    </location>
</feature>
<feature type="transmembrane region" description="Helical" evidence="1">
    <location>
        <begin position="18"/>
        <end position="38"/>
    </location>
</feature>
<feature type="transmembrane region" description="Helical" evidence="1">
    <location>
        <begin position="68"/>
        <end position="88"/>
    </location>
</feature>
<feature type="transmembrane region" description="Helical" evidence="1">
    <location>
        <begin position="117"/>
        <end position="137"/>
    </location>
</feature>
<feature type="transmembrane region" description="Helical" evidence="1">
    <location>
        <begin position="147"/>
        <end position="167"/>
    </location>
</feature>
<feature type="transmembrane region" description="Helical" evidence="1">
    <location>
        <begin position="174"/>
        <end position="194"/>
    </location>
</feature>
<feature type="transmembrane region" description="Helical" evidence="1">
    <location>
        <begin position="217"/>
        <end position="237"/>
    </location>
</feature>
<feature type="transmembrane region" description="Helical" evidence="1">
    <location>
        <begin position="270"/>
        <end position="290"/>
    </location>
</feature>
<feature type="transmembrane region" description="Helical" evidence="1">
    <location>
        <begin position="308"/>
        <end position="328"/>
    </location>
</feature>
<feature type="transmembrane region" description="Helical" evidence="1">
    <location>
        <begin position="368"/>
        <end position="388"/>
    </location>
</feature>
<feature type="transmembrane region" description="Helical" evidence="1">
    <location>
        <begin position="389"/>
        <end position="409"/>
    </location>
</feature>
<sequence length="430" mass="47419">MFQTFVRFFTTKEVRNKIFFTLAMLVIFKIGTYIPAPGVNPEAFNHPQGSQGATELLNTFGGGALKRFSIFAMGIMPYITASIVMQLLQMDIVPKFTEWAKQGEMGRRKINNVTRYFAIILAFIQSIGMAFQFNNYLKGQLIIEKSVMSYLLIAVVLTAGTAFLIWLGDQITQFGVGNGISLIIFAGILSTLPSSLEQFAQSVFVGQDDTSLAWLKILGLIVALILLTVGAIFVLEAKRKIPIQYAKKQSAQRLGSQATYLPLKVNSAGVIPVIFAMAFFLLPRTLTLFFPKAEWAQNIADTANPSSNIGMIIYVVLIIAFAYFYAFVQVNPEKMADNLKKQGSYVPGIRPGEQTKKYITKVLYRLTFVGSIFLAAIAILPIIATKFMGLPQSIQIGGTSLLIVIGVAIETMKTLEAQVTQKEYKGFGGR</sequence>
<accession>Q5HM19</accession>
<reference key="1">
    <citation type="journal article" date="2005" name="J. Bacteriol.">
        <title>Insights on evolution of virulence and resistance from the complete genome analysis of an early methicillin-resistant Staphylococcus aureus strain and a biofilm-producing methicillin-resistant Staphylococcus epidermidis strain.</title>
        <authorList>
            <person name="Gill S.R."/>
            <person name="Fouts D.E."/>
            <person name="Archer G.L."/>
            <person name="Mongodin E.F."/>
            <person name="DeBoy R.T."/>
            <person name="Ravel J."/>
            <person name="Paulsen I.T."/>
            <person name="Kolonay J.F."/>
            <person name="Brinkac L.M."/>
            <person name="Beanan M.J."/>
            <person name="Dodson R.J."/>
            <person name="Daugherty S.C."/>
            <person name="Madupu R."/>
            <person name="Angiuoli S.V."/>
            <person name="Durkin A.S."/>
            <person name="Haft D.H."/>
            <person name="Vamathevan J.J."/>
            <person name="Khouri H."/>
            <person name="Utterback T.R."/>
            <person name="Lee C."/>
            <person name="Dimitrov G."/>
            <person name="Jiang L."/>
            <person name="Qin H."/>
            <person name="Weidman J."/>
            <person name="Tran K."/>
            <person name="Kang K.H."/>
            <person name="Hance I.R."/>
            <person name="Nelson K.E."/>
            <person name="Fraser C.M."/>
        </authorList>
    </citation>
    <scope>NUCLEOTIDE SEQUENCE [LARGE SCALE GENOMIC DNA]</scope>
    <source>
        <strain>ATCC 35984 / DSM 28319 / BCRC 17069 / CCUG 31568 / BM 3577 / RP62A</strain>
    </source>
</reference>
<protein>
    <recommendedName>
        <fullName evidence="1">Protein translocase subunit SecY</fullName>
    </recommendedName>
</protein>
<organism>
    <name type="scientific">Staphylococcus epidermidis (strain ATCC 35984 / DSM 28319 / BCRC 17069 / CCUG 31568 / BM 3577 / RP62A)</name>
    <dbReference type="NCBI Taxonomy" id="176279"/>
    <lineage>
        <taxon>Bacteria</taxon>
        <taxon>Bacillati</taxon>
        <taxon>Bacillota</taxon>
        <taxon>Bacilli</taxon>
        <taxon>Bacillales</taxon>
        <taxon>Staphylococcaceae</taxon>
        <taxon>Staphylococcus</taxon>
    </lineage>
</organism>
<keyword id="KW-1003">Cell membrane</keyword>
<keyword id="KW-0472">Membrane</keyword>
<keyword id="KW-0653">Protein transport</keyword>
<keyword id="KW-1185">Reference proteome</keyword>
<keyword id="KW-0811">Translocation</keyword>
<keyword id="KW-0812">Transmembrane</keyword>
<keyword id="KW-1133">Transmembrane helix</keyword>
<keyword id="KW-0813">Transport</keyword>
<dbReference type="EMBL" id="CP000029">
    <property type="protein sequence ID" value="AAW55127.1"/>
    <property type="molecule type" value="Genomic_DNA"/>
</dbReference>
<dbReference type="RefSeq" id="WP_001829707.1">
    <property type="nucleotide sequence ID" value="NC_002976.3"/>
</dbReference>
<dbReference type="SMR" id="Q5HM19"/>
<dbReference type="STRING" id="176279.SERP1811"/>
<dbReference type="GeneID" id="50018093"/>
<dbReference type="KEGG" id="ser:SERP1811"/>
<dbReference type="eggNOG" id="COG0201">
    <property type="taxonomic scope" value="Bacteria"/>
</dbReference>
<dbReference type="HOGENOM" id="CLU_030313_0_1_9"/>
<dbReference type="Proteomes" id="UP000000531">
    <property type="component" value="Chromosome"/>
</dbReference>
<dbReference type="GO" id="GO:0005886">
    <property type="term" value="C:plasma membrane"/>
    <property type="evidence" value="ECO:0007669"/>
    <property type="project" value="UniProtKB-SubCell"/>
</dbReference>
<dbReference type="GO" id="GO:0065002">
    <property type="term" value="P:intracellular protein transmembrane transport"/>
    <property type="evidence" value="ECO:0007669"/>
    <property type="project" value="UniProtKB-UniRule"/>
</dbReference>
<dbReference type="GO" id="GO:0006605">
    <property type="term" value="P:protein targeting"/>
    <property type="evidence" value="ECO:0007669"/>
    <property type="project" value="UniProtKB-UniRule"/>
</dbReference>
<dbReference type="GO" id="GO:0043952">
    <property type="term" value="P:protein transport by the Sec complex"/>
    <property type="evidence" value="ECO:0007669"/>
    <property type="project" value="UniProtKB-UniRule"/>
</dbReference>
<dbReference type="FunFam" id="1.10.3370.10:FF:000001">
    <property type="entry name" value="Preprotein translocase subunit SecY"/>
    <property type="match status" value="1"/>
</dbReference>
<dbReference type="Gene3D" id="1.10.3370.10">
    <property type="entry name" value="SecY subunit domain"/>
    <property type="match status" value="1"/>
</dbReference>
<dbReference type="HAMAP" id="MF_01465">
    <property type="entry name" value="SecY"/>
    <property type="match status" value="1"/>
</dbReference>
<dbReference type="InterPro" id="IPR026593">
    <property type="entry name" value="SecY"/>
</dbReference>
<dbReference type="InterPro" id="IPR002208">
    <property type="entry name" value="SecY/SEC61-alpha"/>
</dbReference>
<dbReference type="InterPro" id="IPR030659">
    <property type="entry name" value="SecY_CS"/>
</dbReference>
<dbReference type="InterPro" id="IPR023201">
    <property type="entry name" value="SecY_dom_sf"/>
</dbReference>
<dbReference type="NCBIfam" id="TIGR00967">
    <property type="entry name" value="3a0501s007"/>
    <property type="match status" value="1"/>
</dbReference>
<dbReference type="PANTHER" id="PTHR10906">
    <property type="entry name" value="SECY/SEC61-ALPHA FAMILY MEMBER"/>
    <property type="match status" value="1"/>
</dbReference>
<dbReference type="Pfam" id="PF00344">
    <property type="entry name" value="SecY"/>
    <property type="match status" value="1"/>
</dbReference>
<dbReference type="PIRSF" id="PIRSF004557">
    <property type="entry name" value="SecY"/>
    <property type="match status" value="1"/>
</dbReference>
<dbReference type="PRINTS" id="PR00303">
    <property type="entry name" value="SECYTRNLCASE"/>
</dbReference>
<dbReference type="SUPFAM" id="SSF103491">
    <property type="entry name" value="Preprotein translocase SecY subunit"/>
    <property type="match status" value="1"/>
</dbReference>
<dbReference type="PROSITE" id="PS00755">
    <property type="entry name" value="SECY_1"/>
    <property type="match status" value="1"/>
</dbReference>
<dbReference type="PROSITE" id="PS00756">
    <property type="entry name" value="SECY_2"/>
    <property type="match status" value="1"/>
</dbReference>
<name>SECY_STAEQ</name>
<gene>
    <name evidence="1" type="primary">secY</name>
    <name type="ordered locus">SERP1811</name>
</gene>